<name>RM04_YARLI</name>
<evidence type="ECO:0000250" key="1"/>
<evidence type="ECO:0000255" key="2"/>
<evidence type="ECO:0000256" key="3">
    <source>
        <dbReference type="SAM" id="MobiDB-lite"/>
    </source>
</evidence>
<evidence type="ECO:0000305" key="4"/>
<proteinExistence type="inferred from homology"/>
<sequence>MIRSLHTSAVRQGRKKWPKPLPGSVTGNEFVKKLELKAPIAPALDNIEVPDSHPLWQFFCKDKKIVRDQRSFDSSTRPWSVAELRRKSFEDLHALWYVCLKERNILLKEERVTTRMHFENQNGGYRSEHDRVGETMVNIRHVLAERYRAFEEVQQVLPEVRAQANAEFDEKYVTADAVYDSELSLELERHLVAYYGFSTDPRANAGVQVDEKIIEAVKYGAKLKYERYSGATDENGNPIANHGFVHQPKRDIFEQYLMFLANDTTEGVAEALSYIKQYRESNPLPVAPWNAIRVLQHLVEEKMGAAAVFEEALKNKKLDLSEQDILENIPAQFLNKLPKE</sequence>
<keyword id="KW-0496">Mitochondrion</keyword>
<keyword id="KW-1185">Reference proteome</keyword>
<keyword id="KW-0687">Ribonucleoprotein</keyword>
<keyword id="KW-0689">Ribosomal protein</keyword>
<keyword id="KW-0809">Transit peptide</keyword>
<feature type="transit peptide" description="Mitochondrion" evidence="2">
    <location>
        <begin position="1"/>
        <end status="unknown"/>
    </location>
</feature>
<feature type="chain" id="PRO_0000372414" description="Large ribosomal subunit protein uL29m">
    <location>
        <begin status="unknown"/>
        <end position="340"/>
    </location>
</feature>
<feature type="region of interest" description="Disordered" evidence="3">
    <location>
        <begin position="1"/>
        <end position="22"/>
    </location>
</feature>
<feature type="compositionally biased region" description="Polar residues" evidence="3">
    <location>
        <begin position="1"/>
        <end position="10"/>
    </location>
</feature>
<reference key="1">
    <citation type="journal article" date="2004" name="Nature">
        <title>Genome evolution in yeasts.</title>
        <authorList>
            <person name="Dujon B."/>
            <person name="Sherman D."/>
            <person name="Fischer G."/>
            <person name="Durrens P."/>
            <person name="Casaregola S."/>
            <person name="Lafontaine I."/>
            <person name="de Montigny J."/>
            <person name="Marck C."/>
            <person name="Neuveglise C."/>
            <person name="Talla E."/>
            <person name="Goffard N."/>
            <person name="Frangeul L."/>
            <person name="Aigle M."/>
            <person name="Anthouard V."/>
            <person name="Babour A."/>
            <person name="Barbe V."/>
            <person name="Barnay S."/>
            <person name="Blanchin S."/>
            <person name="Beckerich J.-M."/>
            <person name="Beyne E."/>
            <person name="Bleykasten C."/>
            <person name="Boisrame A."/>
            <person name="Boyer J."/>
            <person name="Cattolico L."/>
            <person name="Confanioleri F."/>
            <person name="de Daruvar A."/>
            <person name="Despons L."/>
            <person name="Fabre E."/>
            <person name="Fairhead C."/>
            <person name="Ferry-Dumazet H."/>
            <person name="Groppi A."/>
            <person name="Hantraye F."/>
            <person name="Hennequin C."/>
            <person name="Jauniaux N."/>
            <person name="Joyet P."/>
            <person name="Kachouri R."/>
            <person name="Kerrest A."/>
            <person name="Koszul R."/>
            <person name="Lemaire M."/>
            <person name="Lesur I."/>
            <person name="Ma L."/>
            <person name="Muller H."/>
            <person name="Nicaud J.-M."/>
            <person name="Nikolski M."/>
            <person name="Oztas S."/>
            <person name="Ozier-Kalogeropoulos O."/>
            <person name="Pellenz S."/>
            <person name="Potier S."/>
            <person name="Richard G.-F."/>
            <person name="Straub M.-L."/>
            <person name="Suleau A."/>
            <person name="Swennen D."/>
            <person name="Tekaia F."/>
            <person name="Wesolowski-Louvel M."/>
            <person name="Westhof E."/>
            <person name="Wirth B."/>
            <person name="Zeniou-Meyer M."/>
            <person name="Zivanovic Y."/>
            <person name="Bolotin-Fukuhara M."/>
            <person name="Thierry A."/>
            <person name="Bouchier C."/>
            <person name="Caudron B."/>
            <person name="Scarpelli C."/>
            <person name="Gaillardin C."/>
            <person name="Weissenbach J."/>
            <person name="Wincker P."/>
            <person name="Souciet J.-L."/>
        </authorList>
    </citation>
    <scope>NUCLEOTIDE SEQUENCE [LARGE SCALE GENOMIC DNA]</scope>
    <source>
        <strain>CLIB 122 / E 150</strain>
    </source>
</reference>
<organism>
    <name type="scientific">Yarrowia lipolytica (strain CLIB 122 / E 150)</name>
    <name type="common">Yeast</name>
    <name type="synonym">Candida lipolytica</name>
    <dbReference type="NCBI Taxonomy" id="284591"/>
    <lineage>
        <taxon>Eukaryota</taxon>
        <taxon>Fungi</taxon>
        <taxon>Dikarya</taxon>
        <taxon>Ascomycota</taxon>
        <taxon>Saccharomycotina</taxon>
        <taxon>Dipodascomycetes</taxon>
        <taxon>Dipodascales</taxon>
        <taxon>Dipodascales incertae sedis</taxon>
        <taxon>Yarrowia</taxon>
    </lineage>
</organism>
<comment type="subunit">
    <text evidence="1">Component of the mitochondrial large ribosomal subunit. Mature mitochondrial ribosomes consist of a small (37S) and a large (54S) subunit. The 37S subunit contains at least 33 different proteins and 1 molecule of RNA (15S). The 54S subunit contains at least 45 different proteins and 1 molecule of RNA (21S) (By similarity).</text>
</comment>
<comment type="subcellular location">
    <subcellularLocation>
        <location evidence="1">Mitochondrion</location>
    </subcellularLocation>
</comment>
<comment type="similarity">
    <text evidence="4">Belongs to the universal ribosomal protein uL29 family.</text>
</comment>
<dbReference type="EMBL" id="CR382128">
    <property type="protein sequence ID" value="CAG82988.1"/>
    <property type="molecule type" value="Genomic_DNA"/>
</dbReference>
<dbReference type="RefSeq" id="XP_500742.1">
    <property type="nucleotide sequence ID" value="XM_500742.1"/>
</dbReference>
<dbReference type="SMR" id="Q6CF20"/>
<dbReference type="FunCoup" id="Q6CF20">
    <property type="interactions" value="210"/>
</dbReference>
<dbReference type="STRING" id="284591.Q6CF20"/>
<dbReference type="EnsemblFungi" id="CAG82988">
    <property type="protein sequence ID" value="CAG82988"/>
    <property type="gene ID" value="YALI0_B11000g"/>
</dbReference>
<dbReference type="KEGG" id="yli:2906875"/>
<dbReference type="VEuPathDB" id="FungiDB:YALI0_B11000g"/>
<dbReference type="HOGENOM" id="CLU_872105_0_0_1"/>
<dbReference type="InParanoid" id="Q6CF20"/>
<dbReference type="OMA" id="IRTTMWR"/>
<dbReference type="OrthoDB" id="123503at4891"/>
<dbReference type="Proteomes" id="UP000001300">
    <property type="component" value="Chromosome B"/>
</dbReference>
<dbReference type="GO" id="GO:0005762">
    <property type="term" value="C:mitochondrial large ribosomal subunit"/>
    <property type="evidence" value="ECO:0000318"/>
    <property type="project" value="GO_Central"/>
</dbReference>
<dbReference type="GO" id="GO:0003735">
    <property type="term" value="F:structural constituent of ribosome"/>
    <property type="evidence" value="ECO:0000318"/>
    <property type="project" value="GO_Central"/>
</dbReference>
<dbReference type="GO" id="GO:0032543">
    <property type="term" value="P:mitochondrial translation"/>
    <property type="evidence" value="ECO:0000318"/>
    <property type="project" value="GO_Central"/>
</dbReference>
<dbReference type="Gene3D" id="6.10.140.1190">
    <property type="match status" value="1"/>
</dbReference>
<dbReference type="Gene3D" id="6.10.330.20">
    <property type="match status" value="1"/>
</dbReference>
<dbReference type="InterPro" id="IPR038340">
    <property type="entry name" value="MRP-L47_sf"/>
</dbReference>
<dbReference type="InterPro" id="IPR010729">
    <property type="entry name" value="Ribosomal_uL29_mit"/>
</dbReference>
<dbReference type="PANTHER" id="PTHR21183:SF18">
    <property type="entry name" value="LARGE RIBOSOMAL SUBUNIT PROTEIN UL29M"/>
    <property type="match status" value="1"/>
</dbReference>
<dbReference type="PANTHER" id="PTHR21183">
    <property type="entry name" value="RIBOSOMAL PROTEIN L47, MITOCHONDRIAL-RELATED"/>
    <property type="match status" value="1"/>
</dbReference>
<dbReference type="Pfam" id="PF06984">
    <property type="entry name" value="MRP-L47"/>
    <property type="match status" value="1"/>
</dbReference>
<protein>
    <recommendedName>
        <fullName evidence="4">Large ribosomal subunit protein uL29m</fullName>
    </recommendedName>
    <alternativeName>
        <fullName>54S ribosomal protein L4, mitochondrial</fullName>
    </alternativeName>
</protein>
<accession>Q6CF20</accession>
<gene>
    <name type="primary">MRPL4</name>
    <name type="ordered locus">YALI0B11000g</name>
</gene>